<name>CYB_HYPNI</name>
<evidence type="ECO:0000250" key="1"/>
<evidence type="ECO:0000250" key="2">
    <source>
        <dbReference type="UniProtKB" id="P00157"/>
    </source>
</evidence>
<evidence type="ECO:0000255" key="3">
    <source>
        <dbReference type="PROSITE-ProRule" id="PRU00968"/>
    </source>
</evidence>
<geneLocation type="mitochondrion"/>
<comment type="function">
    <text evidence="2">Component of the ubiquinol-cytochrome c reductase complex (complex III or cytochrome b-c1 complex) that is part of the mitochondrial respiratory chain. The b-c1 complex mediates electron transfer from ubiquinol to cytochrome c. Contributes to the generation of a proton gradient across the mitochondrial membrane that is then used for ATP synthesis.</text>
</comment>
<comment type="cofactor">
    <cofactor evidence="2">
        <name>heme b</name>
        <dbReference type="ChEBI" id="CHEBI:60344"/>
    </cofactor>
    <text evidence="2">Binds 2 heme b groups non-covalently.</text>
</comment>
<comment type="subunit">
    <text evidence="2">The cytochrome bc1 complex contains 3 respiratory subunits (MT-CYB, CYC1 and UQCRFS1), 2 core proteins (UQCRC1 and UQCRC2) and probably 6 low-molecular weight proteins.</text>
</comment>
<comment type="subcellular location">
    <subcellularLocation>
        <location evidence="2">Mitochondrion inner membrane</location>
        <topology evidence="2">Multi-pass membrane protein</topology>
    </subcellularLocation>
</comment>
<comment type="miscellaneous">
    <text evidence="1">Heme 1 (or BL or b562) is low-potential and absorbs at about 562 nm, and heme 2 (or BH or b566) is high-potential and absorbs at about 566 nm.</text>
</comment>
<comment type="similarity">
    <text evidence="3">Belongs to the cytochrome b family.</text>
</comment>
<comment type="caution">
    <text evidence="2">The full-length protein contains only eight transmembrane helices, not nine as predicted by bioinformatics tools.</text>
</comment>
<accession>P16366</accession>
<protein>
    <recommendedName>
        <fullName>Cytochrome b</fullName>
    </recommendedName>
    <alternativeName>
        <fullName>Complex III subunit 3</fullName>
    </alternativeName>
    <alternativeName>
        <fullName>Complex III subunit III</fullName>
    </alternativeName>
    <alternativeName>
        <fullName>Cytochrome b-c1 complex subunit 3</fullName>
    </alternativeName>
    <alternativeName>
        <fullName>Ubiquinol-cytochrome-c reductase complex cytochrome b subunit</fullName>
    </alternativeName>
</protein>
<proteinExistence type="inferred from homology"/>
<organism>
    <name type="scientific">Hypsophrys nicaraguensis</name>
    <name type="common">Moga</name>
    <name type="synonym">Cichlasoma nicaraguense</name>
    <dbReference type="NCBI Taxonomy" id="131240"/>
    <lineage>
        <taxon>Eukaryota</taxon>
        <taxon>Metazoa</taxon>
        <taxon>Chordata</taxon>
        <taxon>Craniata</taxon>
        <taxon>Vertebrata</taxon>
        <taxon>Euteleostomi</taxon>
        <taxon>Actinopterygii</taxon>
        <taxon>Neopterygii</taxon>
        <taxon>Teleostei</taxon>
        <taxon>Neoteleostei</taxon>
        <taxon>Acanthomorphata</taxon>
        <taxon>Ovalentaria</taxon>
        <taxon>Cichlomorphae</taxon>
        <taxon>Cichliformes</taxon>
        <taxon>Cichlidae</taxon>
        <taxon>New World cichlids</taxon>
        <taxon>Cichlasomatinae</taxon>
        <taxon>Cichlasomatini</taxon>
        <taxon>Hypsophrys</taxon>
    </lineage>
</organism>
<dbReference type="EMBL" id="M25694">
    <property type="protein sequence ID" value="AAA31688.1"/>
    <property type="molecule type" value="Genomic_DNA"/>
</dbReference>
<dbReference type="PIR" id="E33286">
    <property type="entry name" value="E33286"/>
</dbReference>
<dbReference type="SMR" id="P16366"/>
<dbReference type="GO" id="GO:0005743">
    <property type="term" value="C:mitochondrial inner membrane"/>
    <property type="evidence" value="ECO:0007669"/>
    <property type="project" value="UniProtKB-SubCell"/>
</dbReference>
<dbReference type="GO" id="GO:0046872">
    <property type="term" value="F:metal ion binding"/>
    <property type="evidence" value="ECO:0007669"/>
    <property type="project" value="UniProtKB-KW"/>
</dbReference>
<dbReference type="GO" id="GO:0008121">
    <property type="term" value="F:ubiquinol-cytochrome-c reductase activity"/>
    <property type="evidence" value="ECO:0007669"/>
    <property type="project" value="TreeGrafter"/>
</dbReference>
<dbReference type="GO" id="GO:0006122">
    <property type="term" value="P:mitochondrial electron transport, ubiquinol to cytochrome c"/>
    <property type="evidence" value="ECO:0007669"/>
    <property type="project" value="TreeGrafter"/>
</dbReference>
<dbReference type="Gene3D" id="1.20.810.10">
    <property type="entry name" value="Cytochrome Bc1 Complex, Chain C"/>
    <property type="match status" value="1"/>
</dbReference>
<dbReference type="InterPro" id="IPR005797">
    <property type="entry name" value="Cyt_b/b6_N"/>
</dbReference>
<dbReference type="InterPro" id="IPR027387">
    <property type="entry name" value="Cytb/b6-like_sf"/>
</dbReference>
<dbReference type="InterPro" id="IPR016174">
    <property type="entry name" value="Di-haem_cyt_TM"/>
</dbReference>
<dbReference type="PANTHER" id="PTHR19271">
    <property type="entry name" value="CYTOCHROME B"/>
    <property type="match status" value="1"/>
</dbReference>
<dbReference type="PANTHER" id="PTHR19271:SF16">
    <property type="entry name" value="CYTOCHROME B"/>
    <property type="match status" value="1"/>
</dbReference>
<dbReference type="Pfam" id="PF00033">
    <property type="entry name" value="Cytochrome_B"/>
    <property type="match status" value="1"/>
</dbReference>
<dbReference type="SUPFAM" id="SSF81342">
    <property type="entry name" value="Transmembrane di-heme cytochromes"/>
    <property type="match status" value="1"/>
</dbReference>
<dbReference type="PROSITE" id="PS51002">
    <property type="entry name" value="CYTB_NTER"/>
    <property type="match status" value="1"/>
</dbReference>
<feature type="chain" id="PRO_0000060791" description="Cytochrome b">
    <location>
        <begin position="1" status="less than"/>
        <end position="79" status="greater than"/>
    </location>
</feature>
<feature type="transmembrane region" description="Helical" evidence="2">
    <location>
        <begin position="1" status="less than"/>
        <end position="7"/>
    </location>
</feature>
<feature type="transmembrane region" description="Helical" evidence="2">
    <location>
        <begin position="31"/>
        <end position="52"/>
    </location>
</feature>
<feature type="transmembrane region" description="Helical" evidence="2">
    <location>
        <begin position="67"/>
        <end position="79" status="greater than"/>
    </location>
</feature>
<feature type="binding site" description="axial binding residue" evidence="2">
    <location>
        <position position="37"/>
    </location>
    <ligand>
        <name>heme b</name>
        <dbReference type="ChEBI" id="CHEBI:60344"/>
        <label>b562</label>
    </ligand>
    <ligandPart>
        <name>Fe</name>
        <dbReference type="ChEBI" id="CHEBI:18248"/>
    </ligandPart>
</feature>
<feature type="binding site" description="axial binding residue" evidence="2">
    <location>
        <position position="51"/>
    </location>
    <ligand>
        <name>heme b</name>
        <dbReference type="ChEBI" id="CHEBI:60344"/>
        <label>b566</label>
    </ligand>
    <ligandPart>
        <name>Fe</name>
        <dbReference type="ChEBI" id="CHEBI:18248"/>
    </ligandPart>
</feature>
<feature type="non-terminal residue">
    <location>
        <position position="1"/>
    </location>
</feature>
<feature type="non-terminal residue">
    <location>
        <position position="79"/>
    </location>
</feature>
<sequence>TAMFLAMHYTSDIATAFSSVAHICRDVNYGWLIRNMHANGASFFFICIYLHIGRGLYYGSYLYKETWNVGVILLLLTMM</sequence>
<keyword id="KW-0249">Electron transport</keyword>
<keyword id="KW-0349">Heme</keyword>
<keyword id="KW-0408">Iron</keyword>
<keyword id="KW-0472">Membrane</keyword>
<keyword id="KW-0479">Metal-binding</keyword>
<keyword id="KW-0496">Mitochondrion</keyword>
<keyword id="KW-0999">Mitochondrion inner membrane</keyword>
<keyword id="KW-0679">Respiratory chain</keyword>
<keyword id="KW-0812">Transmembrane</keyword>
<keyword id="KW-1133">Transmembrane helix</keyword>
<keyword id="KW-0813">Transport</keyword>
<keyword id="KW-0830">Ubiquinone</keyword>
<reference key="1">
    <citation type="journal article" date="1989" name="Proc. Natl. Acad. Sci. U.S.A.">
        <title>Dynamics of mitochondrial DNA evolution in animals: amplification and sequencing with conserved primers.</title>
        <authorList>
            <person name="Kocher T.D."/>
            <person name="Thomas W.K."/>
            <person name="Meyer A."/>
            <person name="Edwards S.V."/>
            <person name="Paeaebo S."/>
            <person name="Villablanca F.X."/>
            <person name="Wilson A.C."/>
        </authorList>
    </citation>
    <scope>NUCLEOTIDE SEQUENCE [GENOMIC DNA]</scope>
</reference>
<gene>
    <name type="primary">mt-cyb</name>
    <name type="synonym">cob</name>
    <name type="synonym">cytb</name>
    <name type="synonym">mtcyb</name>
</gene>